<protein>
    <recommendedName>
        <fullName evidence="4">UDP-glycosyltransferase 79B30</fullName>
        <ecNumber evidence="5">2.4.1.239</ecNumber>
    </recommendedName>
    <alternativeName>
        <fullName evidence="4">Flavonol 3-O-glucoside/galactoside (1-&gt;2) glucosyltransferase</fullName>
        <shortName evidence="4">GmF3G2''Gt-b</shortName>
    </alternativeName>
</protein>
<comment type="function">
    <text evidence="3">Flavonol 3-O-glucoside/galactoside (1-&gt;2) glucosyltransferase converting kaempferol 3-O-glucoside to kaempferol 3-O-sophoroside. Has a broad in vitro activity for kaempferol/ quercetin 3-O-glucoside/galactoside derivatives, but cannot glucosylate kaempferol 3-O-rhamnosyl-(1-&gt;4)-[rhamnosyl-(1-&gt;6)- glucoside] and 3-O-rhamnosyl-(1-&gt;4)-[glucosyl-(1-&gt;6)-glucoside]. Has a higher preference for UDP-glucose than UDP-galactose, and no activity with UDP-arabinose and UDP-glucuronic acid. Represents probably a recessive allele of the gene.</text>
</comment>
<comment type="catalytic activity">
    <reaction evidence="5">
        <text>a flavonol 3-O-beta-D-glucoside + UDP-alpha-D-glucose = a flavonol 3-O-beta-D-glucosyl-(1-&gt;2)-beta-D-glucoside + UDP + H(+)</text>
        <dbReference type="Rhea" id="RHEA:18893"/>
        <dbReference type="ChEBI" id="CHEBI:15378"/>
        <dbReference type="ChEBI" id="CHEBI:16816"/>
        <dbReference type="ChEBI" id="CHEBI:52142"/>
        <dbReference type="ChEBI" id="CHEBI:58223"/>
        <dbReference type="ChEBI" id="CHEBI:58885"/>
        <dbReference type="EC" id="2.4.1.239"/>
    </reaction>
</comment>
<comment type="tissue specificity">
    <text evidence="3">Expressed in leaves.</text>
</comment>
<comment type="miscellaneous">
    <text evidence="3">Flavonol glycosides (FGs) having glucose at the 2''-position of glucose or galactose that is bound to the 3-position of kaempferol are present in cv. Nezumisaya and absent in cv. Harosoy, whereas FGs having glucose at the 6''-position of glucose or galactose that is bound to the 3-position of kaempferol are present in cv. Harosoy and absent in cv. Nezumisaya.</text>
</comment>
<comment type="similarity">
    <text evidence="5">Belongs to the UDP-glycosyltransferase family.</text>
</comment>
<keyword id="KW-0328">Glycosyltransferase</keyword>
<keyword id="KW-1185">Reference proteome</keyword>
<keyword id="KW-0808">Transferase</keyword>
<feature type="chain" id="PRO_0000436354" description="UDP-glycosyltransferase 79B30">
    <location>
        <begin position="1"/>
        <end position="459"/>
    </location>
</feature>
<feature type="active site" description="Proton acceptor" evidence="1">
    <location>
        <position position="18"/>
    </location>
</feature>
<feature type="active site" description="Charge relay" evidence="1">
    <location>
        <position position="115"/>
    </location>
</feature>
<feature type="binding site" evidence="2">
    <location>
        <position position="18"/>
    </location>
    <ligand>
        <name>an anthocyanidin</name>
        <dbReference type="ChEBI" id="CHEBI:143576"/>
    </ligand>
</feature>
<feature type="binding site" evidence="1">
    <location>
        <position position="136"/>
    </location>
    <ligand>
        <name>UDP-alpha-D-glucose</name>
        <dbReference type="ChEBI" id="CHEBI:58885"/>
    </ligand>
</feature>
<feature type="binding site" evidence="1">
    <location>
        <position position="333"/>
    </location>
    <ligand>
        <name>UDP-alpha-D-glucose</name>
        <dbReference type="ChEBI" id="CHEBI:58885"/>
    </ligand>
</feature>
<feature type="binding site" evidence="1">
    <location>
        <position position="335"/>
    </location>
    <ligand>
        <name>UDP-alpha-D-glucose</name>
        <dbReference type="ChEBI" id="CHEBI:58885"/>
    </ligand>
</feature>
<feature type="binding site" evidence="1">
    <location>
        <position position="350"/>
    </location>
    <ligand>
        <name>UDP-alpha-D-glucose</name>
        <dbReference type="ChEBI" id="CHEBI:58885"/>
    </ligand>
</feature>
<feature type="binding site" evidence="1">
    <location>
        <position position="355"/>
    </location>
    <ligand>
        <name>UDP-alpha-D-glucose</name>
        <dbReference type="ChEBI" id="CHEBI:58885"/>
    </ligand>
</feature>
<feature type="binding site" evidence="1">
    <location>
        <position position="358"/>
    </location>
    <ligand>
        <name>UDP-alpha-D-glucose</name>
        <dbReference type="ChEBI" id="CHEBI:58885"/>
    </ligand>
</feature>
<feature type="binding site" evidence="2">
    <location>
        <position position="373"/>
    </location>
    <ligand>
        <name>an anthocyanidin</name>
        <dbReference type="ChEBI" id="CHEBI:143576"/>
    </ligand>
</feature>
<feature type="binding site" evidence="1">
    <location>
        <position position="374"/>
    </location>
    <ligand>
        <name>UDP-alpha-D-glucose</name>
        <dbReference type="ChEBI" id="CHEBI:58885"/>
    </ligand>
</feature>
<feature type="binding site" evidence="1">
    <location>
        <position position="375"/>
    </location>
    <ligand>
        <name>UDP-alpha-D-glucose</name>
        <dbReference type="ChEBI" id="CHEBI:58885"/>
    </ligand>
</feature>
<organism evidence="6">
    <name type="scientific">Glycine max</name>
    <name type="common">Soybean</name>
    <name type="synonym">Glycine hispida</name>
    <dbReference type="NCBI Taxonomy" id="3847"/>
    <lineage>
        <taxon>Eukaryota</taxon>
        <taxon>Viridiplantae</taxon>
        <taxon>Streptophyta</taxon>
        <taxon>Embryophyta</taxon>
        <taxon>Tracheophyta</taxon>
        <taxon>Spermatophyta</taxon>
        <taxon>Magnoliopsida</taxon>
        <taxon>eudicotyledons</taxon>
        <taxon>Gunneridae</taxon>
        <taxon>Pentapetalae</taxon>
        <taxon>rosids</taxon>
        <taxon>fabids</taxon>
        <taxon>Fabales</taxon>
        <taxon>Fabaceae</taxon>
        <taxon>Papilionoideae</taxon>
        <taxon>50 kb inversion clade</taxon>
        <taxon>NPAAA clade</taxon>
        <taxon>indigoferoid/millettioid clade</taxon>
        <taxon>Phaseoleae</taxon>
        <taxon>Glycine</taxon>
        <taxon>Glycine subgen. Soja</taxon>
    </lineage>
</organism>
<proteinExistence type="evidence at protein level"/>
<name>FG3H_SOYBN</name>
<dbReference type="EC" id="2.4.1.239" evidence="5"/>
<dbReference type="EMBL" id="LC017845">
    <property type="protein sequence ID" value="BAR88078.1"/>
    <property type="molecule type" value="mRNA"/>
</dbReference>
<dbReference type="EMBL" id="CM000839">
    <property type="protein sequence ID" value="KRH55845.1"/>
    <property type="molecule type" value="Genomic_DNA"/>
</dbReference>
<dbReference type="RefSeq" id="NP_001345948.1">
    <property type="nucleotide sequence ID" value="NM_001359019.1"/>
</dbReference>
<dbReference type="SMR" id="I1KEV6"/>
<dbReference type="STRING" id="3847.I1KEV6"/>
<dbReference type="PaxDb" id="3847-GLYMA06G43880.1"/>
<dbReference type="EnsemblPlants" id="KRH55845">
    <property type="protein sequence ID" value="KRH55845"/>
    <property type="gene ID" value="GLYMA_06G285700"/>
</dbReference>
<dbReference type="GeneID" id="100787444"/>
<dbReference type="Gramene" id="KRH55845">
    <property type="protein sequence ID" value="KRH55845"/>
    <property type="gene ID" value="GLYMA_06G285700"/>
</dbReference>
<dbReference type="eggNOG" id="KOG1192">
    <property type="taxonomic scope" value="Eukaryota"/>
</dbReference>
<dbReference type="HOGENOM" id="CLU_001724_2_3_1"/>
<dbReference type="InParanoid" id="I1KEV6"/>
<dbReference type="OMA" id="IRANHAR"/>
<dbReference type="BRENDA" id="2.4.1.239">
    <property type="organism ID" value="2483"/>
</dbReference>
<dbReference type="Proteomes" id="UP000008827">
    <property type="component" value="Chromosome 6"/>
</dbReference>
<dbReference type="GO" id="GO:0033838">
    <property type="term" value="F:flavonol-3-O-glucoside glucosyltransferase activity"/>
    <property type="evidence" value="ECO:0000314"/>
    <property type="project" value="UniProtKB"/>
</dbReference>
<dbReference type="GO" id="GO:0035251">
    <property type="term" value="F:UDP-glucosyltransferase activity"/>
    <property type="evidence" value="ECO:0000318"/>
    <property type="project" value="GO_Central"/>
</dbReference>
<dbReference type="CDD" id="cd03784">
    <property type="entry name" value="GT1_Gtf-like"/>
    <property type="match status" value="1"/>
</dbReference>
<dbReference type="FunFam" id="3.40.50.2000:FF:000037">
    <property type="entry name" value="Glycosyltransferase"/>
    <property type="match status" value="1"/>
</dbReference>
<dbReference type="FunFam" id="3.40.50.2000:FF:000087">
    <property type="entry name" value="Glycosyltransferase"/>
    <property type="match status" value="1"/>
</dbReference>
<dbReference type="Gene3D" id="3.40.50.2000">
    <property type="entry name" value="Glycogen Phosphorylase B"/>
    <property type="match status" value="2"/>
</dbReference>
<dbReference type="InterPro" id="IPR050481">
    <property type="entry name" value="UDP-glycosyltransf_plant"/>
</dbReference>
<dbReference type="InterPro" id="IPR002213">
    <property type="entry name" value="UDP_glucos_trans"/>
</dbReference>
<dbReference type="InterPro" id="IPR035595">
    <property type="entry name" value="UDP_glycos_trans_CS"/>
</dbReference>
<dbReference type="PANTHER" id="PTHR48049">
    <property type="entry name" value="GLYCOSYLTRANSFERASE"/>
    <property type="match status" value="1"/>
</dbReference>
<dbReference type="PANTHER" id="PTHR48049:SF67">
    <property type="entry name" value="UDP-GLYCOSYLTRANSFERASE 79B30"/>
    <property type="match status" value="1"/>
</dbReference>
<dbReference type="Pfam" id="PF00201">
    <property type="entry name" value="UDPGT"/>
    <property type="match status" value="1"/>
</dbReference>
<dbReference type="SUPFAM" id="SSF53756">
    <property type="entry name" value="UDP-Glycosyltransferase/glycogen phosphorylase"/>
    <property type="match status" value="1"/>
</dbReference>
<dbReference type="PROSITE" id="PS00375">
    <property type="entry name" value="UDPGT"/>
    <property type="match status" value="1"/>
</dbReference>
<reference key="1">
    <citation type="journal article" date="2015" name="BMC Plant Biol.">
        <title>Linkage mapping, molecular cloning and functional analysis of soybean gene Fg3 encoding flavonol 3-O-glucoside/galactoside (1-&gt;2) glucosyltransferase.</title>
        <authorList>
            <person name="Di S."/>
            <person name="Yan F."/>
            <person name="Rodas F.R."/>
            <person name="Rodriguez T.O."/>
            <person name="Murai Y."/>
            <person name="Iwashina T."/>
            <person name="Sugawara S."/>
            <person name="Mori T."/>
            <person name="Nakabayashi R."/>
            <person name="Yonekura-Sakakibara K."/>
            <person name="Saito K."/>
            <person name="Takahashi R."/>
        </authorList>
    </citation>
    <scope>NUCLEOTIDE SEQUENCE [MRNA]</scope>
    <scope>FUNCTION</scope>
    <scope>CATALYTIC ACTIVITY</scope>
    <scope>3D-STRUCTURE MODELING</scope>
    <scope>TISSUE SPECIFICITY</scope>
    <source>
        <strain>cv. Harosoy</strain>
    </source>
</reference>
<reference key="2">
    <citation type="journal article" date="2010" name="Nature">
        <title>Genome sequence of the palaeopolyploid soybean.</title>
        <authorList>
            <person name="Schmutz J."/>
            <person name="Cannon S.B."/>
            <person name="Schlueter J."/>
            <person name="Ma J."/>
            <person name="Mitros T."/>
            <person name="Nelson W."/>
            <person name="Hyten D.L."/>
            <person name="Song Q."/>
            <person name="Thelen J.J."/>
            <person name="Cheng J."/>
            <person name="Xu D."/>
            <person name="Hellsten U."/>
            <person name="May G.D."/>
            <person name="Yu Y."/>
            <person name="Sakurai T."/>
            <person name="Umezawa T."/>
            <person name="Bhattacharyya M.K."/>
            <person name="Sandhu D."/>
            <person name="Valliyodan B."/>
            <person name="Lindquist E."/>
            <person name="Peto M."/>
            <person name="Grant D."/>
            <person name="Shu S."/>
            <person name="Goodstein D."/>
            <person name="Barry K."/>
            <person name="Futrell-Griggs M."/>
            <person name="Abernathy B."/>
            <person name="Du J."/>
            <person name="Tian Z."/>
            <person name="Zhu L."/>
            <person name="Gill N."/>
            <person name="Joshi T."/>
            <person name="Libault M."/>
            <person name="Sethuraman A."/>
            <person name="Zhang X.-C."/>
            <person name="Shinozaki K."/>
            <person name="Nguyen H.T."/>
            <person name="Wing R.A."/>
            <person name="Cregan P."/>
            <person name="Specht J."/>
            <person name="Grimwood J."/>
            <person name="Rokhsar D."/>
            <person name="Stacey G."/>
            <person name="Shoemaker R.C."/>
            <person name="Jackson S.A."/>
        </authorList>
    </citation>
    <scope>NUCLEOTIDE SEQUENCE [LARGE SCALE GENOMIC DNA]</scope>
    <source>
        <strain>cv. Williams 82</strain>
    </source>
</reference>
<sequence>MKSRPLHIAMYPWLAMGHQTAFLHLCNKLAIRGHKISFITPPKAQAKLEPFNLHPNSITFVTINVPHVEGLPPDAQTTADVTYPLQPQIMTAMDLTKDDIETLLTGLKPDLVFYDFTHWMPALAKRLGIKAVHYCTASSVMVGYTLTPSRFHQGTDLMESDLMEPPEGYPDSSIKLQTHEARTFAAKRKDTFGSNVLFYDRQFIALNEADLLAYRTCREIEGPYMDYIGKQFNKPVVATGPVILDPPTLDLEEKFSTWLGGFEPGSVVYCCFGSECTLRPNQFLELVLGLELTGMPFLAAVKAPLGFETVESAMPEGFQERVKGRGFVYGGWVQQQLILAHPSVGCFITHCGSGSLSEALVNKCQLVLLPNVGDQILNARMMGTNLEVGVEVEKGDEDGMYTKESVCKAVSIVMDCENETSKRVRANHARIRELLLNKDLESSYVDSFCMRLQEIVEGI</sequence>
<gene>
    <name evidence="4" type="primary">FG3</name>
    <name evidence="4" type="synonym">UGT79B30</name>
    <name type="ordered locus">Glyma06g43880</name>
</gene>
<evidence type="ECO:0000250" key="1">
    <source>
        <dbReference type="UniProtKB" id="A0A0A1HA03"/>
    </source>
</evidence>
<evidence type="ECO:0000250" key="2">
    <source>
        <dbReference type="UniProtKB" id="P51094"/>
    </source>
</evidence>
<evidence type="ECO:0000269" key="3">
    <source>
    </source>
</evidence>
<evidence type="ECO:0000303" key="4">
    <source>
    </source>
</evidence>
<evidence type="ECO:0000305" key="5"/>
<evidence type="ECO:0000312" key="6">
    <source>
        <dbReference type="Proteomes" id="UP000008827"/>
    </source>
</evidence>
<accession>I1KEV6</accession>